<accession>Q60AZ2</accession>
<proteinExistence type="inferred from homology"/>
<feature type="chain" id="PRO_0000258702" description="Large ribosomal subunit protein bL35">
    <location>
        <begin position="1"/>
        <end position="65"/>
    </location>
</feature>
<feature type="region of interest" description="Disordered" evidence="2">
    <location>
        <begin position="1"/>
        <end position="52"/>
    </location>
</feature>
<feature type="compositionally biased region" description="Basic residues" evidence="2">
    <location>
        <begin position="26"/>
        <end position="44"/>
    </location>
</feature>
<gene>
    <name evidence="1" type="primary">rpmI</name>
    <name type="ordered locus">MCA0695</name>
</gene>
<protein>
    <recommendedName>
        <fullName evidence="1">Large ribosomal subunit protein bL35</fullName>
    </recommendedName>
    <alternativeName>
        <fullName evidence="3">50S ribosomal protein L35</fullName>
    </alternativeName>
</protein>
<dbReference type="EMBL" id="AE017282">
    <property type="protein sequence ID" value="AAU93167.1"/>
    <property type="molecule type" value="Genomic_DNA"/>
</dbReference>
<dbReference type="RefSeq" id="WP_010960033.1">
    <property type="nucleotide sequence ID" value="NC_002977.6"/>
</dbReference>
<dbReference type="SMR" id="Q60AZ2"/>
<dbReference type="STRING" id="243233.MCA0695"/>
<dbReference type="GeneID" id="88223015"/>
<dbReference type="KEGG" id="mca:MCA0695"/>
<dbReference type="eggNOG" id="COG0291">
    <property type="taxonomic scope" value="Bacteria"/>
</dbReference>
<dbReference type="HOGENOM" id="CLU_169643_1_1_6"/>
<dbReference type="Proteomes" id="UP000006821">
    <property type="component" value="Chromosome"/>
</dbReference>
<dbReference type="GO" id="GO:0022625">
    <property type="term" value="C:cytosolic large ribosomal subunit"/>
    <property type="evidence" value="ECO:0007669"/>
    <property type="project" value="TreeGrafter"/>
</dbReference>
<dbReference type="GO" id="GO:0003735">
    <property type="term" value="F:structural constituent of ribosome"/>
    <property type="evidence" value="ECO:0007669"/>
    <property type="project" value="InterPro"/>
</dbReference>
<dbReference type="GO" id="GO:0006412">
    <property type="term" value="P:translation"/>
    <property type="evidence" value="ECO:0007669"/>
    <property type="project" value="UniProtKB-UniRule"/>
</dbReference>
<dbReference type="FunFam" id="4.10.410.60:FF:000001">
    <property type="entry name" value="50S ribosomal protein L35"/>
    <property type="match status" value="1"/>
</dbReference>
<dbReference type="Gene3D" id="4.10.410.60">
    <property type="match status" value="1"/>
</dbReference>
<dbReference type="HAMAP" id="MF_00514">
    <property type="entry name" value="Ribosomal_bL35"/>
    <property type="match status" value="1"/>
</dbReference>
<dbReference type="InterPro" id="IPR001706">
    <property type="entry name" value="Ribosomal_bL35"/>
</dbReference>
<dbReference type="InterPro" id="IPR021137">
    <property type="entry name" value="Ribosomal_bL35-like"/>
</dbReference>
<dbReference type="InterPro" id="IPR018265">
    <property type="entry name" value="Ribosomal_bL35_CS"/>
</dbReference>
<dbReference type="InterPro" id="IPR037229">
    <property type="entry name" value="Ribosomal_bL35_sf"/>
</dbReference>
<dbReference type="NCBIfam" id="TIGR00001">
    <property type="entry name" value="rpmI_bact"/>
    <property type="match status" value="1"/>
</dbReference>
<dbReference type="PANTHER" id="PTHR33343">
    <property type="entry name" value="54S RIBOSOMAL PROTEIN BL35M"/>
    <property type="match status" value="1"/>
</dbReference>
<dbReference type="PANTHER" id="PTHR33343:SF1">
    <property type="entry name" value="LARGE RIBOSOMAL SUBUNIT PROTEIN BL35M"/>
    <property type="match status" value="1"/>
</dbReference>
<dbReference type="Pfam" id="PF01632">
    <property type="entry name" value="Ribosomal_L35p"/>
    <property type="match status" value="1"/>
</dbReference>
<dbReference type="PRINTS" id="PR00064">
    <property type="entry name" value="RIBOSOMALL35"/>
</dbReference>
<dbReference type="SUPFAM" id="SSF143034">
    <property type="entry name" value="L35p-like"/>
    <property type="match status" value="1"/>
</dbReference>
<dbReference type="PROSITE" id="PS00936">
    <property type="entry name" value="RIBOSOMAL_L35"/>
    <property type="match status" value="1"/>
</dbReference>
<evidence type="ECO:0000255" key="1">
    <source>
        <dbReference type="HAMAP-Rule" id="MF_00514"/>
    </source>
</evidence>
<evidence type="ECO:0000256" key="2">
    <source>
        <dbReference type="SAM" id="MobiDB-lite"/>
    </source>
</evidence>
<evidence type="ECO:0000305" key="3"/>
<name>RL35_METCA</name>
<reference key="1">
    <citation type="journal article" date="2004" name="PLoS Biol.">
        <title>Genomic insights into methanotrophy: the complete genome sequence of Methylococcus capsulatus (Bath).</title>
        <authorList>
            <person name="Ward N.L."/>
            <person name="Larsen O."/>
            <person name="Sakwa J."/>
            <person name="Bruseth L."/>
            <person name="Khouri H.M."/>
            <person name="Durkin A.S."/>
            <person name="Dimitrov G."/>
            <person name="Jiang L."/>
            <person name="Scanlan D."/>
            <person name="Kang K.H."/>
            <person name="Lewis M.R."/>
            <person name="Nelson K.E."/>
            <person name="Methe B.A."/>
            <person name="Wu M."/>
            <person name="Heidelberg J.F."/>
            <person name="Paulsen I.T."/>
            <person name="Fouts D.E."/>
            <person name="Ravel J."/>
            <person name="Tettelin H."/>
            <person name="Ren Q."/>
            <person name="Read T.D."/>
            <person name="DeBoy R.T."/>
            <person name="Seshadri R."/>
            <person name="Salzberg S.L."/>
            <person name="Jensen H.B."/>
            <person name="Birkeland N.K."/>
            <person name="Nelson W.C."/>
            <person name="Dodson R.J."/>
            <person name="Grindhaug S.H."/>
            <person name="Holt I.E."/>
            <person name="Eidhammer I."/>
            <person name="Jonasen I."/>
            <person name="Vanaken S."/>
            <person name="Utterback T.R."/>
            <person name="Feldblyum T.V."/>
            <person name="Fraser C.M."/>
            <person name="Lillehaug J.R."/>
            <person name="Eisen J.A."/>
        </authorList>
    </citation>
    <scope>NUCLEOTIDE SEQUENCE [LARGE SCALE GENOMIC DNA]</scope>
    <source>
        <strain>ATCC 33009 / NCIMB 11132 / Bath</strain>
    </source>
</reference>
<comment type="similarity">
    <text evidence="1">Belongs to the bacterial ribosomal protein bL35 family.</text>
</comment>
<organism>
    <name type="scientific">Methylococcus capsulatus (strain ATCC 33009 / NCIMB 11132 / Bath)</name>
    <dbReference type="NCBI Taxonomy" id="243233"/>
    <lineage>
        <taxon>Bacteria</taxon>
        <taxon>Pseudomonadati</taxon>
        <taxon>Pseudomonadota</taxon>
        <taxon>Gammaproteobacteria</taxon>
        <taxon>Methylococcales</taxon>
        <taxon>Methylococcaceae</taxon>
        <taxon>Methylococcus</taxon>
    </lineage>
</organism>
<sequence length="65" mass="7504">MPKIKTNRGAAKRFKRTGSGGFKCVQSHRRHILTKKSTKRKRQLRSPDMVHPSDVRAVARMLPYT</sequence>
<keyword id="KW-1185">Reference proteome</keyword>
<keyword id="KW-0687">Ribonucleoprotein</keyword>
<keyword id="KW-0689">Ribosomal protein</keyword>